<comment type="function">
    <text evidence="1">Ligates lysine onto the cytidine present at position 34 of the AUA codon-specific tRNA(Ile) that contains the anticodon CAU, in an ATP-dependent manner. Cytidine is converted to lysidine, thus changing the amino acid specificity of the tRNA from methionine to isoleucine.</text>
</comment>
<comment type="catalytic activity">
    <reaction evidence="1">
        <text>cytidine(34) in tRNA(Ile2) + L-lysine + ATP = lysidine(34) in tRNA(Ile2) + AMP + diphosphate + H(+)</text>
        <dbReference type="Rhea" id="RHEA:43744"/>
        <dbReference type="Rhea" id="RHEA-COMP:10625"/>
        <dbReference type="Rhea" id="RHEA-COMP:10670"/>
        <dbReference type="ChEBI" id="CHEBI:15378"/>
        <dbReference type="ChEBI" id="CHEBI:30616"/>
        <dbReference type="ChEBI" id="CHEBI:32551"/>
        <dbReference type="ChEBI" id="CHEBI:33019"/>
        <dbReference type="ChEBI" id="CHEBI:82748"/>
        <dbReference type="ChEBI" id="CHEBI:83665"/>
        <dbReference type="ChEBI" id="CHEBI:456215"/>
        <dbReference type="EC" id="6.3.4.19"/>
    </reaction>
</comment>
<comment type="subcellular location">
    <subcellularLocation>
        <location evidence="1">Cytoplasm</location>
    </subcellularLocation>
</comment>
<comment type="domain">
    <text>The N-terminal region contains the highly conserved SGGXDS motif, predicted to be a P-loop motif involved in ATP binding.</text>
</comment>
<comment type="similarity">
    <text evidence="1">Belongs to the tRNA(Ile)-lysidine synthase family.</text>
</comment>
<keyword id="KW-0067">ATP-binding</keyword>
<keyword id="KW-0963">Cytoplasm</keyword>
<keyword id="KW-0436">Ligase</keyword>
<keyword id="KW-0547">Nucleotide-binding</keyword>
<keyword id="KW-1185">Reference proteome</keyword>
<keyword id="KW-0819">tRNA processing</keyword>
<proteinExistence type="inferred from homology"/>
<reference key="1">
    <citation type="journal article" date="2002" name="Nucleic Acids Res.">
        <title>Genome sequence of Shigella flexneri 2a: insights into pathogenicity through comparison with genomes of Escherichia coli K12 and O157.</title>
        <authorList>
            <person name="Jin Q."/>
            <person name="Yuan Z."/>
            <person name="Xu J."/>
            <person name="Wang Y."/>
            <person name="Shen Y."/>
            <person name="Lu W."/>
            <person name="Wang J."/>
            <person name="Liu H."/>
            <person name="Yang J."/>
            <person name="Yang F."/>
            <person name="Zhang X."/>
            <person name="Zhang J."/>
            <person name="Yang G."/>
            <person name="Wu H."/>
            <person name="Qu D."/>
            <person name="Dong J."/>
            <person name="Sun L."/>
            <person name="Xue Y."/>
            <person name="Zhao A."/>
            <person name="Gao Y."/>
            <person name="Zhu J."/>
            <person name="Kan B."/>
            <person name="Ding K."/>
            <person name="Chen S."/>
            <person name="Cheng H."/>
            <person name="Yao Z."/>
            <person name="He B."/>
            <person name="Chen R."/>
            <person name="Ma D."/>
            <person name="Qiang B."/>
            <person name="Wen Y."/>
            <person name="Hou Y."/>
            <person name="Yu J."/>
        </authorList>
    </citation>
    <scope>NUCLEOTIDE SEQUENCE [LARGE SCALE GENOMIC DNA]</scope>
    <source>
        <strain>301 / Serotype 2a</strain>
    </source>
</reference>
<reference key="2">
    <citation type="journal article" date="2003" name="Infect. Immun.">
        <title>Complete genome sequence and comparative genomics of Shigella flexneri serotype 2a strain 2457T.</title>
        <authorList>
            <person name="Wei J."/>
            <person name="Goldberg M.B."/>
            <person name="Burland V."/>
            <person name="Venkatesan M.M."/>
            <person name="Deng W."/>
            <person name="Fournier G."/>
            <person name="Mayhew G.F."/>
            <person name="Plunkett G. III"/>
            <person name="Rose D.J."/>
            <person name="Darling A."/>
            <person name="Mau B."/>
            <person name="Perna N.T."/>
            <person name="Payne S.M."/>
            <person name="Runyen-Janecky L.J."/>
            <person name="Zhou S."/>
            <person name="Schwartz D.C."/>
            <person name="Blattner F.R."/>
        </authorList>
    </citation>
    <scope>NUCLEOTIDE SEQUENCE [LARGE SCALE GENOMIC DNA]</scope>
    <source>
        <strain>ATCC 700930 / 2457T / Serotype 2a</strain>
    </source>
</reference>
<name>TILS_SHIFL</name>
<accession>Q7UDQ6</accession>
<accession>Q83SL0</accession>
<feature type="chain" id="PRO_0000181763" description="tRNA(Ile)-lysidine synthase">
    <location>
        <begin position="1"/>
        <end position="432"/>
    </location>
</feature>
<feature type="binding site" evidence="1">
    <location>
        <begin position="20"/>
        <end position="25"/>
    </location>
    <ligand>
        <name>ATP</name>
        <dbReference type="ChEBI" id="CHEBI:30616"/>
    </ligand>
</feature>
<feature type="sequence conflict" description="In Ref. 2; AAP15721." evidence="2" ref="2">
    <original>I</original>
    <variation>V</variation>
    <location>
        <position position="313"/>
    </location>
</feature>
<gene>
    <name evidence="1" type="primary">tilS</name>
    <name type="ordered locus">SF0178</name>
    <name type="ordered locus">S0181</name>
</gene>
<organism>
    <name type="scientific">Shigella flexneri</name>
    <dbReference type="NCBI Taxonomy" id="623"/>
    <lineage>
        <taxon>Bacteria</taxon>
        <taxon>Pseudomonadati</taxon>
        <taxon>Pseudomonadota</taxon>
        <taxon>Gammaproteobacteria</taxon>
        <taxon>Enterobacterales</taxon>
        <taxon>Enterobacteriaceae</taxon>
        <taxon>Shigella</taxon>
    </lineage>
</organism>
<dbReference type="EC" id="6.3.4.19" evidence="1"/>
<dbReference type="EMBL" id="AE005674">
    <property type="protein sequence ID" value="AAN41840.1"/>
    <property type="molecule type" value="Genomic_DNA"/>
</dbReference>
<dbReference type="EMBL" id="AE014073">
    <property type="protein sequence ID" value="AAP15721.1"/>
    <property type="molecule type" value="Genomic_DNA"/>
</dbReference>
<dbReference type="RefSeq" id="NP_706133.1">
    <property type="nucleotide sequence ID" value="NC_004337.2"/>
</dbReference>
<dbReference type="RefSeq" id="WP_000176575.1">
    <property type="nucleotide sequence ID" value="NZ_CP123365.1"/>
</dbReference>
<dbReference type="SMR" id="Q7UDQ6"/>
<dbReference type="STRING" id="198214.SF0178"/>
<dbReference type="PaxDb" id="198214-SF0178"/>
<dbReference type="GeneID" id="1025964"/>
<dbReference type="KEGG" id="sfl:SF0178"/>
<dbReference type="KEGG" id="sfx:S0181"/>
<dbReference type="PATRIC" id="fig|198214.7.peg.200"/>
<dbReference type="HOGENOM" id="CLU_018869_2_0_6"/>
<dbReference type="Proteomes" id="UP000001006">
    <property type="component" value="Chromosome"/>
</dbReference>
<dbReference type="Proteomes" id="UP000002673">
    <property type="component" value="Chromosome"/>
</dbReference>
<dbReference type="GO" id="GO:0005737">
    <property type="term" value="C:cytoplasm"/>
    <property type="evidence" value="ECO:0007669"/>
    <property type="project" value="UniProtKB-SubCell"/>
</dbReference>
<dbReference type="GO" id="GO:0005524">
    <property type="term" value="F:ATP binding"/>
    <property type="evidence" value="ECO:0007669"/>
    <property type="project" value="UniProtKB-UniRule"/>
</dbReference>
<dbReference type="GO" id="GO:0032267">
    <property type="term" value="F:tRNA(Ile)-lysidine synthase activity"/>
    <property type="evidence" value="ECO:0007669"/>
    <property type="project" value="UniProtKB-EC"/>
</dbReference>
<dbReference type="GO" id="GO:0006400">
    <property type="term" value="P:tRNA modification"/>
    <property type="evidence" value="ECO:0007669"/>
    <property type="project" value="UniProtKB-UniRule"/>
</dbReference>
<dbReference type="CDD" id="cd01992">
    <property type="entry name" value="TilS_N"/>
    <property type="match status" value="1"/>
</dbReference>
<dbReference type="FunFam" id="3.40.50.620:FF:000173">
    <property type="entry name" value="tRNA(Ile)-lysidine synthase"/>
    <property type="match status" value="1"/>
</dbReference>
<dbReference type="Gene3D" id="1.20.59.20">
    <property type="match status" value="1"/>
</dbReference>
<dbReference type="Gene3D" id="3.40.50.620">
    <property type="entry name" value="HUPs"/>
    <property type="match status" value="1"/>
</dbReference>
<dbReference type="HAMAP" id="MF_01161">
    <property type="entry name" value="tRNA_Ile_lys_synt"/>
    <property type="match status" value="1"/>
</dbReference>
<dbReference type="InterPro" id="IPR012796">
    <property type="entry name" value="Lysidine-tRNA-synth_C"/>
</dbReference>
<dbReference type="InterPro" id="IPR014729">
    <property type="entry name" value="Rossmann-like_a/b/a_fold"/>
</dbReference>
<dbReference type="InterPro" id="IPR011063">
    <property type="entry name" value="TilS/TtcA_N"/>
</dbReference>
<dbReference type="InterPro" id="IPR012094">
    <property type="entry name" value="tRNA_Ile_lys_synt"/>
</dbReference>
<dbReference type="InterPro" id="IPR012795">
    <property type="entry name" value="tRNA_Ile_lys_synt_N"/>
</dbReference>
<dbReference type="InterPro" id="IPR015262">
    <property type="entry name" value="tRNA_Ile_lys_synt_subst-bd"/>
</dbReference>
<dbReference type="NCBIfam" id="TIGR02433">
    <property type="entry name" value="lysidine_TilS_C"/>
    <property type="match status" value="1"/>
</dbReference>
<dbReference type="NCBIfam" id="TIGR02432">
    <property type="entry name" value="lysidine_TilS_N"/>
    <property type="match status" value="1"/>
</dbReference>
<dbReference type="NCBIfam" id="NF007942">
    <property type="entry name" value="PRK10660.1"/>
    <property type="match status" value="1"/>
</dbReference>
<dbReference type="PANTHER" id="PTHR43033">
    <property type="entry name" value="TRNA(ILE)-LYSIDINE SYNTHASE-RELATED"/>
    <property type="match status" value="1"/>
</dbReference>
<dbReference type="PANTHER" id="PTHR43033:SF1">
    <property type="entry name" value="TRNA(ILE)-LYSIDINE SYNTHASE-RELATED"/>
    <property type="match status" value="1"/>
</dbReference>
<dbReference type="Pfam" id="PF01171">
    <property type="entry name" value="ATP_bind_3"/>
    <property type="match status" value="1"/>
</dbReference>
<dbReference type="Pfam" id="PF09179">
    <property type="entry name" value="TilS"/>
    <property type="match status" value="1"/>
</dbReference>
<dbReference type="Pfam" id="PF11734">
    <property type="entry name" value="TilS_C"/>
    <property type="match status" value="1"/>
</dbReference>
<dbReference type="SMART" id="SM00977">
    <property type="entry name" value="TilS_C"/>
    <property type="match status" value="1"/>
</dbReference>
<dbReference type="SUPFAM" id="SSF52402">
    <property type="entry name" value="Adenine nucleotide alpha hydrolases-like"/>
    <property type="match status" value="1"/>
</dbReference>
<dbReference type="SUPFAM" id="SSF82829">
    <property type="entry name" value="MesJ substrate recognition domain-like"/>
    <property type="match status" value="1"/>
</dbReference>
<dbReference type="SUPFAM" id="SSF56037">
    <property type="entry name" value="PheT/TilS domain"/>
    <property type="match status" value="1"/>
</dbReference>
<evidence type="ECO:0000255" key="1">
    <source>
        <dbReference type="HAMAP-Rule" id="MF_01161"/>
    </source>
</evidence>
<evidence type="ECO:0000305" key="2"/>
<sequence length="432" mass="48104">MTLTLNRQLLTSRQILVAFSGGLDSTVLLHQLVQWRTENPGVTLRAIHVHHGLSANADAWVTHCENVCQQWQVPLVVERVQLAQEGLGIEAQARQARYQAFARTLLPGEVLVTAQHLDDQCETFLLALKRGSGPAGLSAMAEVSEFAGTRLIRPLLARTRGELEQWALAHGLRWIEDESNQDDSYDRNFLRLRVVPLLQQRWPHFAEATARSATLCAEQESLLDELLADDLAHCQTSQGTLQIAPMLAMSDARRAAIIRRWLAGQNAPMPSRDALVRIWQEVALAREDASPCLRLGAFEIRRYQSQLWWIKSITGQSETIVLWQTWLQPLELPAGLGTVQLTAGGDIRPPRADEAVSVRFKAPGLLHIVGRNGGRKLKKIWQELGVPPWLRDTTPLLFYGETLIAAAGVFVTQEGVAEGENGVSFVWQKTLS</sequence>
<protein>
    <recommendedName>
        <fullName evidence="1">tRNA(Ile)-lysidine synthase</fullName>
        <ecNumber evidence="1">6.3.4.19</ecNumber>
    </recommendedName>
    <alternativeName>
        <fullName evidence="1">tRNA(Ile)-2-lysyl-cytidine synthase</fullName>
    </alternativeName>
    <alternativeName>
        <fullName evidence="1">tRNA(Ile)-lysidine synthetase</fullName>
    </alternativeName>
</protein>